<reference key="1">
    <citation type="journal article" date="2009" name="J. Bacteriol.">
        <title>Role of conjugative elements in the evolution of the multidrug-resistant pandemic clone Streptococcus pneumoniae Spain23F ST81.</title>
        <authorList>
            <person name="Croucher N.J."/>
            <person name="Walker D."/>
            <person name="Romero P."/>
            <person name="Lennard N."/>
            <person name="Paterson G.K."/>
            <person name="Bason N.C."/>
            <person name="Mitchell A.M."/>
            <person name="Quail M.A."/>
            <person name="Andrew P.W."/>
            <person name="Parkhill J."/>
            <person name="Bentley S.D."/>
            <person name="Mitchell T.J."/>
        </authorList>
    </citation>
    <scope>NUCLEOTIDE SEQUENCE [LARGE SCALE GENOMIC DNA]</scope>
    <source>
        <strain>ATCC 700669 / Spain 23F-1</strain>
    </source>
</reference>
<dbReference type="EMBL" id="FM211187">
    <property type="protein sequence ID" value="CAR68064.1"/>
    <property type="molecule type" value="Genomic_DNA"/>
</dbReference>
<dbReference type="RefSeq" id="WP_000818137.1">
    <property type="nucleotide sequence ID" value="NC_011900.1"/>
</dbReference>
<dbReference type="SMR" id="B8ZKG2"/>
<dbReference type="GeneID" id="93738962"/>
<dbReference type="KEGG" id="sne:SPN23F02040"/>
<dbReference type="HOGENOM" id="CLU_083987_3_3_9"/>
<dbReference type="GO" id="GO:0022625">
    <property type="term" value="C:cytosolic large ribosomal subunit"/>
    <property type="evidence" value="ECO:0007669"/>
    <property type="project" value="TreeGrafter"/>
</dbReference>
<dbReference type="GO" id="GO:0019843">
    <property type="term" value="F:rRNA binding"/>
    <property type="evidence" value="ECO:0007669"/>
    <property type="project" value="UniProtKB-UniRule"/>
</dbReference>
<dbReference type="GO" id="GO:0003735">
    <property type="term" value="F:structural constituent of ribosome"/>
    <property type="evidence" value="ECO:0007669"/>
    <property type="project" value="InterPro"/>
</dbReference>
<dbReference type="GO" id="GO:0006412">
    <property type="term" value="P:translation"/>
    <property type="evidence" value="ECO:0007669"/>
    <property type="project" value="UniProtKB-UniRule"/>
</dbReference>
<dbReference type="CDD" id="cd00336">
    <property type="entry name" value="Ribosomal_L22"/>
    <property type="match status" value="1"/>
</dbReference>
<dbReference type="FunFam" id="3.90.470.10:FF:000001">
    <property type="entry name" value="50S ribosomal protein L22"/>
    <property type="match status" value="1"/>
</dbReference>
<dbReference type="Gene3D" id="3.90.470.10">
    <property type="entry name" value="Ribosomal protein L22/L17"/>
    <property type="match status" value="1"/>
</dbReference>
<dbReference type="HAMAP" id="MF_01331_B">
    <property type="entry name" value="Ribosomal_uL22_B"/>
    <property type="match status" value="1"/>
</dbReference>
<dbReference type="InterPro" id="IPR001063">
    <property type="entry name" value="Ribosomal_uL22"/>
</dbReference>
<dbReference type="InterPro" id="IPR005727">
    <property type="entry name" value="Ribosomal_uL22_bac/chlpt-type"/>
</dbReference>
<dbReference type="InterPro" id="IPR047867">
    <property type="entry name" value="Ribosomal_uL22_bac/org-type"/>
</dbReference>
<dbReference type="InterPro" id="IPR018260">
    <property type="entry name" value="Ribosomal_uL22_CS"/>
</dbReference>
<dbReference type="InterPro" id="IPR036394">
    <property type="entry name" value="Ribosomal_uL22_sf"/>
</dbReference>
<dbReference type="NCBIfam" id="TIGR01044">
    <property type="entry name" value="rplV_bact"/>
    <property type="match status" value="1"/>
</dbReference>
<dbReference type="PANTHER" id="PTHR13501">
    <property type="entry name" value="CHLOROPLAST 50S RIBOSOMAL PROTEIN L22-RELATED"/>
    <property type="match status" value="1"/>
</dbReference>
<dbReference type="PANTHER" id="PTHR13501:SF8">
    <property type="entry name" value="LARGE RIBOSOMAL SUBUNIT PROTEIN UL22M"/>
    <property type="match status" value="1"/>
</dbReference>
<dbReference type="Pfam" id="PF00237">
    <property type="entry name" value="Ribosomal_L22"/>
    <property type="match status" value="1"/>
</dbReference>
<dbReference type="SUPFAM" id="SSF54843">
    <property type="entry name" value="Ribosomal protein L22"/>
    <property type="match status" value="1"/>
</dbReference>
<dbReference type="PROSITE" id="PS00464">
    <property type="entry name" value="RIBOSOMAL_L22"/>
    <property type="match status" value="1"/>
</dbReference>
<sequence>MAEITSAKAMARTVRVSPRKSRLVLDNIRGKSVADAIAILTFTPNKAAEIILKVLNSAVANAENNFGLDKANLVVSEAFANEGPTMKRFRPRAKGSASPINKRTAHITVAVAEK</sequence>
<proteinExistence type="inferred from homology"/>
<feature type="chain" id="PRO_1000166086" description="Large ribosomal subunit protein uL22">
    <location>
        <begin position="1"/>
        <end position="114"/>
    </location>
</feature>
<name>RL22_STRPJ</name>
<comment type="function">
    <text evidence="1">This protein binds specifically to 23S rRNA; its binding is stimulated by other ribosomal proteins, e.g. L4, L17, and L20. It is important during the early stages of 50S assembly. It makes multiple contacts with different domains of the 23S rRNA in the assembled 50S subunit and ribosome (By similarity).</text>
</comment>
<comment type="function">
    <text evidence="1">The globular domain of the protein is located near the polypeptide exit tunnel on the outside of the subunit, while an extended beta-hairpin is found that lines the wall of the exit tunnel in the center of the 70S ribosome.</text>
</comment>
<comment type="subunit">
    <text evidence="1">Part of the 50S ribosomal subunit.</text>
</comment>
<comment type="similarity">
    <text evidence="1">Belongs to the universal ribosomal protein uL22 family.</text>
</comment>
<accession>B8ZKG2</accession>
<evidence type="ECO:0000255" key="1">
    <source>
        <dbReference type="HAMAP-Rule" id="MF_01331"/>
    </source>
</evidence>
<evidence type="ECO:0000305" key="2"/>
<protein>
    <recommendedName>
        <fullName evidence="1">Large ribosomal subunit protein uL22</fullName>
    </recommendedName>
    <alternativeName>
        <fullName evidence="2">50S ribosomal protein L22</fullName>
    </alternativeName>
</protein>
<keyword id="KW-0687">Ribonucleoprotein</keyword>
<keyword id="KW-0689">Ribosomal protein</keyword>
<keyword id="KW-0694">RNA-binding</keyword>
<keyword id="KW-0699">rRNA-binding</keyword>
<organism>
    <name type="scientific">Streptococcus pneumoniae (strain ATCC 700669 / Spain 23F-1)</name>
    <dbReference type="NCBI Taxonomy" id="561276"/>
    <lineage>
        <taxon>Bacteria</taxon>
        <taxon>Bacillati</taxon>
        <taxon>Bacillota</taxon>
        <taxon>Bacilli</taxon>
        <taxon>Lactobacillales</taxon>
        <taxon>Streptococcaceae</taxon>
        <taxon>Streptococcus</taxon>
    </lineage>
</organism>
<gene>
    <name evidence="1" type="primary">rplV</name>
    <name type="ordered locus">SPN23F02040</name>
</gene>